<sequence length="358" mass="41626">MAISRLIINHFRNLTAIDLEFERGFNFIIGNNGSGKTSLLEAIFYLGHGRSFKSAVANRIISYQQPHFILHGKIQEQQHQWSVGLQKQRQGNTLMKINGEDAKKISDLAHLLPMQLITPEGLTLLNGGPSYRRAYLDWGLFHHNASFYNAWSSLNRLLKQRNSALQQVCSYEKLKIWDRELTKLAYQVSYWREAYAEALRSEIEKTCQLFLPELEISVSFHQGWDKNMDYADLLQQNFERDRALGYTFSGPQKADFRFKANGLPVEDILSRGQLKLLMCALRLAQGEHLMQQKKRHCIFLLDDFASELDQYKRTLLAERLQKNGSQVFVTAITREQLQQIQPEKHRTFYLENGRIKDL</sequence>
<dbReference type="EMBL" id="CP000947">
    <property type="protein sequence ID" value="ACA31931.1"/>
    <property type="molecule type" value="Genomic_DNA"/>
</dbReference>
<dbReference type="RefSeq" id="WP_012341166.1">
    <property type="nucleotide sequence ID" value="NC_010519.1"/>
</dbReference>
<dbReference type="SMR" id="B0UUM0"/>
<dbReference type="STRING" id="228400.HSM_0003"/>
<dbReference type="GeneID" id="31486278"/>
<dbReference type="KEGG" id="hsm:HSM_0003"/>
<dbReference type="HOGENOM" id="CLU_040267_0_0_6"/>
<dbReference type="GO" id="GO:0005737">
    <property type="term" value="C:cytoplasm"/>
    <property type="evidence" value="ECO:0007669"/>
    <property type="project" value="UniProtKB-SubCell"/>
</dbReference>
<dbReference type="GO" id="GO:0005524">
    <property type="term" value="F:ATP binding"/>
    <property type="evidence" value="ECO:0007669"/>
    <property type="project" value="UniProtKB-UniRule"/>
</dbReference>
<dbReference type="GO" id="GO:0003697">
    <property type="term" value="F:single-stranded DNA binding"/>
    <property type="evidence" value="ECO:0007669"/>
    <property type="project" value="UniProtKB-UniRule"/>
</dbReference>
<dbReference type="GO" id="GO:0006260">
    <property type="term" value="P:DNA replication"/>
    <property type="evidence" value="ECO:0007669"/>
    <property type="project" value="UniProtKB-UniRule"/>
</dbReference>
<dbReference type="GO" id="GO:0000731">
    <property type="term" value="P:DNA synthesis involved in DNA repair"/>
    <property type="evidence" value="ECO:0007669"/>
    <property type="project" value="TreeGrafter"/>
</dbReference>
<dbReference type="GO" id="GO:0006302">
    <property type="term" value="P:double-strand break repair"/>
    <property type="evidence" value="ECO:0007669"/>
    <property type="project" value="TreeGrafter"/>
</dbReference>
<dbReference type="GO" id="GO:0009432">
    <property type="term" value="P:SOS response"/>
    <property type="evidence" value="ECO:0007669"/>
    <property type="project" value="UniProtKB-UniRule"/>
</dbReference>
<dbReference type="FunFam" id="1.20.1050.90:FF:000001">
    <property type="entry name" value="DNA replication and repair protein RecF"/>
    <property type="match status" value="1"/>
</dbReference>
<dbReference type="Gene3D" id="3.40.50.300">
    <property type="entry name" value="P-loop containing nucleotide triphosphate hydrolases"/>
    <property type="match status" value="1"/>
</dbReference>
<dbReference type="Gene3D" id="1.20.1050.90">
    <property type="entry name" value="RecF/RecN/SMC, N-terminal domain"/>
    <property type="match status" value="1"/>
</dbReference>
<dbReference type="HAMAP" id="MF_00365">
    <property type="entry name" value="RecF"/>
    <property type="match status" value="1"/>
</dbReference>
<dbReference type="InterPro" id="IPR001238">
    <property type="entry name" value="DNA-binding_RecF"/>
</dbReference>
<dbReference type="InterPro" id="IPR018078">
    <property type="entry name" value="DNA-binding_RecF_CS"/>
</dbReference>
<dbReference type="InterPro" id="IPR027417">
    <property type="entry name" value="P-loop_NTPase"/>
</dbReference>
<dbReference type="InterPro" id="IPR003395">
    <property type="entry name" value="RecF/RecN/SMC_N"/>
</dbReference>
<dbReference type="InterPro" id="IPR042174">
    <property type="entry name" value="RecF_2"/>
</dbReference>
<dbReference type="NCBIfam" id="TIGR00611">
    <property type="entry name" value="recf"/>
    <property type="match status" value="1"/>
</dbReference>
<dbReference type="PANTHER" id="PTHR32182">
    <property type="entry name" value="DNA REPLICATION AND REPAIR PROTEIN RECF"/>
    <property type="match status" value="1"/>
</dbReference>
<dbReference type="PANTHER" id="PTHR32182:SF0">
    <property type="entry name" value="DNA REPLICATION AND REPAIR PROTEIN RECF"/>
    <property type="match status" value="1"/>
</dbReference>
<dbReference type="Pfam" id="PF02463">
    <property type="entry name" value="SMC_N"/>
    <property type="match status" value="1"/>
</dbReference>
<dbReference type="SUPFAM" id="SSF52540">
    <property type="entry name" value="P-loop containing nucleoside triphosphate hydrolases"/>
    <property type="match status" value="1"/>
</dbReference>
<dbReference type="PROSITE" id="PS00617">
    <property type="entry name" value="RECF_1"/>
    <property type="match status" value="1"/>
</dbReference>
<dbReference type="PROSITE" id="PS00618">
    <property type="entry name" value="RECF_2"/>
    <property type="match status" value="1"/>
</dbReference>
<protein>
    <recommendedName>
        <fullName evidence="1">DNA replication and repair protein RecF</fullName>
    </recommendedName>
</protein>
<gene>
    <name evidence="1" type="primary">recF</name>
    <name type="ordered locus">HSM_0003</name>
</gene>
<proteinExistence type="inferred from homology"/>
<evidence type="ECO:0000255" key="1">
    <source>
        <dbReference type="HAMAP-Rule" id="MF_00365"/>
    </source>
</evidence>
<feature type="chain" id="PRO_1000079589" description="DNA replication and repair protein RecF">
    <location>
        <begin position="1"/>
        <end position="358"/>
    </location>
</feature>
<feature type="binding site" evidence="1">
    <location>
        <begin position="30"/>
        <end position="37"/>
    </location>
    <ligand>
        <name>ATP</name>
        <dbReference type="ChEBI" id="CHEBI:30616"/>
    </ligand>
</feature>
<reference key="1">
    <citation type="submission" date="2008-02" db="EMBL/GenBank/DDBJ databases">
        <title>Complete sequence of Haemophilus somnus 2336.</title>
        <authorList>
            <consortium name="US DOE Joint Genome Institute"/>
            <person name="Siddaramappa S."/>
            <person name="Duncan A.J."/>
            <person name="Challacombe J.F."/>
            <person name="Rainey D."/>
            <person name="Gillaspy A.F."/>
            <person name="Carson M."/>
            <person name="Gipson J."/>
            <person name="Gipson M."/>
            <person name="Bruce D."/>
            <person name="Detter J.C."/>
            <person name="Han C.S."/>
            <person name="Land M."/>
            <person name="Tapia R."/>
            <person name="Thompson L.S."/>
            <person name="Orvis J."/>
            <person name="Zaitshik J."/>
            <person name="Barnes G."/>
            <person name="Brettin T.S."/>
            <person name="Dyer D.W."/>
            <person name="Inzana T.J."/>
        </authorList>
    </citation>
    <scope>NUCLEOTIDE SEQUENCE [LARGE SCALE GENOMIC DNA]</scope>
    <source>
        <strain>2336</strain>
    </source>
</reference>
<accession>B0UUM0</accession>
<name>RECF_HISS2</name>
<keyword id="KW-0067">ATP-binding</keyword>
<keyword id="KW-0963">Cytoplasm</keyword>
<keyword id="KW-0227">DNA damage</keyword>
<keyword id="KW-0234">DNA repair</keyword>
<keyword id="KW-0235">DNA replication</keyword>
<keyword id="KW-0238">DNA-binding</keyword>
<keyword id="KW-0547">Nucleotide-binding</keyword>
<keyword id="KW-0742">SOS response</keyword>
<comment type="function">
    <text evidence="1">The RecF protein is involved in DNA metabolism; it is required for DNA replication and normal SOS inducibility. RecF binds preferentially to single-stranded, linear DNA. It also seems to bind ATP.</text>
</comment>
<comment type="subcellular location">
    <subcellularLocation>
        <location evidence="1">Cytoplasm</location>
    </subcellularLocation>
</comment>
<comment type="similarity">
    <text evidence="1">Belongs to the RecF family.</text>
</comment>
<organism>
    <name type="scientific">Histophilus somni (strain 2336)</name>
    <name type="common">Haemophilus somnus</name>
    <dbReference type="NCBI Taxonomy" id="228400"/>
    <lineage>
        <taxon>Bacteria</taxon>
        <taxon>Pseudomonadati</taxon>
        <taxon>Pseudomonadota</taxon>
        <taxon>Gammaproteobacteria</taxon>
        <taxon>Pasteurellales</taxon>
        <taxon>Pasteurellaceae</taxon>
        <taxon>Histophilus</taxon>
    </lineage>
</organism>